<accession>A7FMD9</accession>
<organism>
    <name type="scientific">Yersinia pseudotuberculosis serotype O:1b (strain IP 31758)</name>
    <dbReference type="NCBI Taxonomy" id="349747"/>
    <lineage>
        <taxon>Bacteria</taxon>
        <taxon>Pseudomonadati</taxon>
        <taxon>Pseudomonadota</taxon>
        <taxon>Gammaproteobacteria</taxon>
        <taxon>Enterobacterales</taxon>
        <taxon>Yersiniaceae</taxon>
        <taxon>Yersinia</taxon>
    </lineage>
</organism>
<dbReference type="EMBL" id="CP000720">
    <property type="protein sequence ID" value="ABS46900.1"/>
    <property type="molecule type" value="Genomic_DNA"/>
</dbReference>
<dbReference type="RefSeq" id="WP_002220715.1">
    <property type="nucleotide sequence ID" value="NC_009708.1"/>
</dbReference>
<dbReference type="SMR" id="A7FMD9"/>
<dbReference type="GeneID" id="97457675"/>
<dbReference type="KEGG" id="ypi:YpsIP31758_3462"/>
<dbReference type="HOGENOM" id="CLU_160655_4_0_6"/>
<dbReference type="Proteomes" id="UP000002412">
    <property type="component" value="Chromosome"/>
</dbReference>
<dbReference type="GO" id="GO:0005829">
    <property type="term" value="C:cytosol"/>
    <property type="evidence" value="ECO:0007669"/>
    <property type="project" value="TreeGrafter"/>
</dbReference>
<dbReference type="GO" id="GO:0015935">
    <property type="term" value="C:small ribosomal subunit"/>
    <property type="evidence" value="ECO:0007669"/>
    <property type="project" value="TreeGrafter"/>
</dbReference>
<dbReference type="GO" id="GO:0070181">
    <property type="term" value="F:small ribosomal subunit rRNA binding"/>
    <property type="evidence" value="ECO:0007669"/>
    <property type="project" value="TreeGrafter"/>
</dbReference>
<dbReference type="GO" id="GO:0003735">
    <property type="term" value="F:structural constituent of ribosome"/>
    <property type="evidence" value="ECO:0007669"/>
    <property type="project" value="InterPro"/>
</dbReference>
<dbReference type="GO" id="GO:0006412">
    <property type="term" value="P:translation"/>
    <property type="evidence" value="ECO:0007669"/>
    <property type="project" value="UniProtKB-UniRule"/>
</dbReference>
<dbReference type="FunFam" id="1.20.58.110:FF:000001">
    <property type="entry name" value="30S ribosomal protein S20"/>
    <property type="match status" value="1"/>
</dbReference>
<dbReference type="Gene3D" id="1.20.58.110">
    <property type="entry name" value="Ribosomal protein S20"/>
    <property type="match status" value="1"/>
</dbReference>
<dbReference type="HAMAP" id="MF_00500">
    <property type="entry name" value="Ribosomal_bS20"/>
    <property type="match status" value="1"/>
</dbReference>
<dbReference type="InterPro" id="IPR002583">
    <property type="entry name" value="Ribosomal_bS20"/>
</dbReference>
<dbReference type="InterPro" id="IPR036510">
    <property type="entry name" value="Ribosomal_bS20_sf"/>
</dbReference>
<dbReference type="NCBIfam" id="TIGR00029">
    <property type="entry name" value="S20"/>
    <property type="match status" value="1"/>
</dbReference>
<dbReference type="PANTHER" id="PTHR33398">
    <property type="entry name" value="30S RIBOSOMAL PROTEIN S20"/>
    <property type="match status" value="1"/>
</dbReference>
<dbReference type="PANTHER" id="PTHR33398:SF1">
    <property type="entry name" value="SMALL RIBOSOMAL SUBUNIT PROTEIN BS20C"/>
    <property type="match status" value="1"/>
</dbReference>
<dbReference type="Pfam" id="PF01649">
    <property type="entry name" value="Ribosomal_S20p"/>
    <property type="match status" value="1"/>
</dbReference>
<dbReference type="SUPFAM" id="SSF46992">
    <property type="entry name" value="Ribosomal protein S20"/>
    <property type="match status" value="1"/>
</dbReference>
<name>RS20_YERP3</name>
<reference key="1">
    <citation type="journal article" date="2007" name="PLoS Genet.">
        <title>The complete genome sequence of Yersinia pseudotuberculosis IP31758, the causative agent of Far East scarlet-like fever.</title>
        <authorList>
            <person name="Eppinger M."/>
            <person name="Rosovitz M.J."/>
            <person name="Fricke W.F."/>
            <person name="Rasko D.A."/>
            <person name="Kokorina G."/>
            <person name="Fayolle C."/>
            <person name="Lindler L.E."/>
            <person name="Carniel E."/>
            <person name="Ravel J."/>
        </authorList>
    </citation>
    <scope>NUCLEOTIDE SEQUENCE [LARGE SCALE GENOMIC DNA]</scope>
    <source>
        <strain>IP 31758</strain>
    </source>
</reference>
<sequence>MANIKSAKKRAVQSEKRRKHNASRRSMVRTFIKKVYAAIAAGDKDAAQKAFNEMQPIVDRQSCKGLIHKNKAARHKSNLVAQINAMQ</sequence>
<keyword id="KW-0687">Ribonucleoprotein</keyword>
<keyword id="KW-0689">Ribosomal protein</keyword>
<keyword id="KW-0694">RNA-binding</keyword>
<keyword id="KW-0699">rRNA-binding</keyword>
<evidence type="ECO:0000255" key="1">
    <source>
        <dbReference type="HAMAP-Rule" id="MF_00500"/>
    </source>
</evidence>
<evidence type="ECO:0000256" key="2">
    <source>
        <dbReference type="SAM" id="MobiDB-lite"/>
    </source>
</evidence>
<evidence type="ECO:0000305" key="3"/>
<feature type="chain" id="PRO_1000060497" description="Small ribosomal subunit protein bS20">
    <location>
        <begin position="1"/>
        <end position="87"/>
    </location>
</feature>
<feature type="region of interest" description="Disordered" evidence="2">
    <location>
        <begin position="1"/>
        <end position="25"/>
    </location>
</feature>
<gene>
    <name evidence="1" type="primary">rpsT</name>
    <name type="ordered locus">YpsIP31758_3462</name>
</gene>
<proteinExistence type="inferred from homology"/>
<protein>
    <recommendedName>
        <fullName evidence="1">Small ribosomal subunit protein bS20</fullName>
    </recommendedName>
    <alternativeName>
        <fullName evidence="3">30S ribosomal protein S20</fullName>
    </alternativeName>
</protein>
<comment type="function">
    <text evidence="1">Binds directly to 16S ribosomal RNA.</text>
</comment>
<comment type="similarity">
    <text evidence="1">Belongs to the bacterial ribosomal protein bS20 family.</text>
</comment>